<comment type="function">
    <text evidence="1">One of the primary rRNA binding proteins, it binds specifically to the 5'-end of 16S ribosomal RNA.</text>
</comment>
<comment type="subunit">
    <text evidence="1">Part of the 30S ribosomal subunit.</text>
</comment>
<comment type="similarity">
    <text evidence="1">Belongs to the universal ribosomal protein uS17 family.</text>
</comment>
<accession>A6VLJ7</accession>
<organism>
    <name type="scientific">Actinobacillus succinogenes (strain ATCC 55618 / DSM 22257 / CCUG 43843 / 130Z)</name>
    <dbReference type="NCBI Taxonomy" id="339671"/>
    <lineage>
        <taxon>Bacteria</taxon>
        <taxon>Pseudomonadati</taxon>
        <taxon>Pseudomonadota</taxon>
        <taxon>Gammaproteobacteria</taxon>
        <taxon>Pasteurellales</taxon>
        <taxon>Pasteurellaceae</taxon>
        <taxon>Actinobacillus</taxon>
    </lineage>
</organism>
<evidence type="ECO:0000255" key="1">
    <source>
        <dbReference type="HAMAP-Rule" id="MF_01345"/>
    </source>
</evidence>
<evidence type="ECO:0000305" key="2"/>
<protein>
    <recommendedName>
        <fullName evidence="1">Small ribosomal subunit protein uS17</fullName>
    </recommendedName>
    <alternativeName>
        <fullName evidence="2">30S ribosomal protein S17</fullName>
    </alternativeName>
</protein>
<keyword id="KW-1185">Reference proteome</keyword>
<keyword id="KW-0687">Ribonucleoprotein</keyword>
<keyword id="KW-0689">Ribosomal protein</keyword>
<keyword id="KW-0694">RNA-binding</keyword>
<keyword id="KW-0699">rRNA-binding</keyword>
<sequence length="85" mass="9885">MTDKIRTVQGRVISDKMDKSFTIAIERKVKHPLLGKFIRRTTKLHVHDENNEARLGDWVEIKECRPVSKTKSWTLVRVVEKATIA</sequence>
<dbReference type="EMBL" id="CP000746">
    <property type="protein sequence ID" value="ABR73844.1"/>
    <property type="molecule type" value="Genomic_DNA"/>
</dbReference>
<dbReference type="RefSeq" id="WP_012072227.1">
    <property type="nucleotide sequence ID" value="NC_009655.1"/>
</dbReference>
<dbReference type="SMR" id="A6VLJ7"/>
<dbReference type="STRING" id="339671.Asuc_0468"/>
<dbReference type="KEGG" id="asu:Asuc_0468"/>
<dbReference type="eggNOG" id="COG0186">
    <property type="taxonomic scope" value="Bacteria"/>
</dbReference>
<dbReference type="HOGENOM" id="CLU_073626_1_1_6"/>
<dbReference type="OrthoDB" id="9811714at2"/>
<dbReference type="Proteomes" id="UP000001114">
    <property type="component" value="Chromosome"/>
</dbReference>
<dbReference type="GO" id="GO:0022627">
    <property type="term" value="C:cytosolic small ribosomal subunit"/>
    <property type="evidence" value="ECO:0007669"/>
    <property type="project" value="TreeGrafter"/>
</dbReference>
<dbReference type="GO" id="GO:0019843">
    <property type="term" value="F:rRNA binding"/>
    <property type="evidence" value="ECO:0007669"/>
    <property type="project" value="UniProtKB-UniRule"/>
</dbReference>
<dbReference type="GO" id="GO:0003735">
    <property type="term" value="F:structural constituent of ribosome"/>
    <property type="evidence" value="ECO:0007669"/>
    <property type="project" value="InterPro"/>
</dbReference>
<dbReference type="GO" id="GO:0006412">
    <property type="term" value="P:translation"/>
    <property type="evidence" value="ECO:0007669"/>
    <property type="project" value="UniProtKB-UniRule"/>
</dbReference>
<dbReference type="CDD" id="cd00364">
    <property type="entry name" value="Ribosomal_uS17"/>
    <property type="match status" value="1"/>
</dbReference>
<dbReference type="FunFam" id="2.40.50.140:FF:000014">
    <property type="entry name" value="30S ribosomal protein S17"/>
    <property type="match status" value="1"/>
</dbReference>
<dbReference type="Gene3D" id="2.40.50.140">
    <property type="entry name" value="Nucleic acid-binding proteins"/>
    <property type="match status" value="1"/>
</dbReference>
<dbReference type="HAMAP" id="MF_01345_B">
    <property type="entry name" value="Ribosomal_uS17_B"/>
    <property type="match status" value="1"/>
</dbReference>
<dbReference type="InterPro" id="IPR012340">
    <property type="entry name" value="NA-bd_OB-fold"/>
</dbReference>
<dbReference type="InterPro" id="IPR000266">
    <property type="entry name" value="Ribosomal_uS17"/>
</dbReference>
<dbReference type="InterPro" id="IPR019984">
    <property type="entry name" value="Ribosomal_uS17_bact/chlr"/>
</dbReference>
<dbReference type="InterPro" id="IPR019979">
    <property type="entry name" value="Ribosomal_uS17_CS"/>
</dbReference>
<dbReference type="NCBIfam" id="NF004123">
    <property type="entry name" value="PRK05610.1"/>
    <property type="match status" value="1"/>
</dbReference>
<dbReference type="NCBIfam" id="TIGR03635">
    <property type="entry name" value="uS17_bact"/>
    <property type="match status" value="1"/>
</dbReference>
<dbReference type="PANTHER" id="PTHR10744">
    <property type="entry name" value="40S RIBOSOMAL PROTEIN S11 FAMILY MEMBER"/>
    <property type="match status" value="1"/>
</dbReference>
<dbReference type="PANTHER" id="PTHR10744:SF1">
    <property type="entry name" value="SMALL RIBOSOMAL SUBUNIT PROTEIN US17M"/>
    <property type="match status" value="1"/>
</dbReference>
<dbReference type="Pfam" id="PF00366">
    <property type="entry name" value="Ribosomal_S17"/>
    <property type="match status" value="1"/>
</dbReference>
<dbReference type="PRINTS" id="PR00973">
    <property type="entry name" value="RIBOSOMALS17"/>
</dbReference>
<dbReference type="SUPFAM" id="SSF50249">
    <property type="entry name" value="Nucleic acid-binding proteins"/>
    <property type="match status" value="1"/>
</dbReference>
<dbReference type="PROSITE" id="PS00056">
    <property type="entry name" value="RIBOSOMAL_S17"/>
    <property type="match status" value="1"/>
</dbReference>
<proteinExistence type="inferred from homology"/>
<gene>
    <name evidence="1" type="primary">rpsQ</name>
    <name type="ordered locus">Asuc_0468</name>
</gene>
<name>RS17_ACTSZ</name>
<feature type="chain" id="PRO_1000073340" description="Small ribosomal subunit protein uS17">
    <location>
        <begin position="1"/>
        <end position="85"/>
    </location>
</feature>
<reference key="1">
    <citation type="journal article" date="2010" name="BMC Genomics">
        <title>A genomic perspective on the potential of Actinobacillus succinogenes for industrial succinate production.</title>
        <authorList>
            <person name="McKinlay J.B."/>
            <person name="Laivenieks M."/>
            <person name="Schindler B.D."/>
            <person name="McKinlay A.A."/>
            <person name="Siddaramappa S."/>
            <person name="Challacombe J.F."/>
            <person name="Lowry S.R."/>
            <person name="Clum A."/>
            <person name="Lapidus A.L."/>
            <person name="Burkhart K.B."/>
            <person name="Harkins V."/>
            <person name="Vieille C."/>
        </authorList>
    </citation>
    <scope>NUCLEOTIDE SEQUENCE [LARGE SCALE GENOMIC DNA]</scope>
    <source>
        <strain>ATCC 55618 / DSM 22257 / CCUG 43843 / 130Z</strain>
    </source>
</reference>